<reference key="1">
    <citation type="submission" date="1999-05" db="EMBL/GenBank/DDBJ databases">
        <title>The role of HOXD11 and HOXD12 for the mesomelic dysplasia Kantaptra type.</title>
        <authorList>
            <person name="Miwa N."/>
            <person name="Yoshiura K."/>
            <person name="Kantaputra P.K."/>
            <person name="Soeda E."/>
            <person name="Niikawa N."/>
        </authorList>
    </citation>
    <scope>NUCLEOTIDE SEQUENCE [GENOMIC DNA]</scope>
</reference>
<reference key="2">
    <citation type="journal article" date="2005" name="Nature">
        <title>Generation and annotation of the DNA sequences of human chromosomes 2 and 4.</title>
        <authorList>
            <person name="Hillier L.W."/>
            <person name="Graves T.A."/>
            <person name="Fulton R.S."/>
            <person name="Fulton L.A."/>
            <person name="Pepin K.H."/>
            <person name="Minx P."/>
            <person name="Wagner-McPherson C."/>
            <person name="Layman D."/>
            <person name="Wylie K."/>
            <person name="Sekhon M."/>
            <person name="Becker M.C."/>
            <person name="Fewell G.A."/>
            <person name="Delehaunty K.D."/>
            <person name="Miner T.L."/>
            <person name="Nash W.E."/>
            <person name="Kremitzki C."/>
            <person name="Oddy L."/>
            <person name="Du H."/>
            <person name="Sun H."/>
            <person name="Bradshaw-Cordum H."/>
            <person name="Ali J."/>
            <person name="Carter J."/>
            <person name="Cordes M."/>
            <person name="Harris A."/>
            <person name="Isak A."/>
            <person name="van Brunt A."/>
            <person name="Nguyen C."/>
            <person name="Du F."/>
            <person name="Courtney L."/>
            <person name="Kalicki J."/>
            <person name="Ozersky P."/>
            <person name="Abbott S."/>
            <person name="Armstrong J."/>
            <person name="Belter E.A."/>
            <person name="Caruso L."/>
            <person name="Cedroni M."/>
            <person name="Cotton M."/>
            <person name="Davidson T."/>
            <person name="Desai A."/>
            <person name="Elliott G."/>
            <person name="Erb T."/>
            <person name="Fronick C."/>
            <person name="Gaige T."/>
            <person name="Haakenson W."/>
            <person name="Haglund K."/>
            <person name="Holmes A."/>
            <person name="Harkins R."/>
            <person name="Kim K."/>
            <person name="Kruchowski S.S."/>
            <person name="Strong C.M."/>
            <person name="Grewal N."/>
            <person name="Goyea E."/>
            <person name="Hou S."/>
            <person name="Levy A."/>
            <person name="Martinka S."/>
            <person name="Mead K."/>
            <person name="McLellan M.D."/>
            <person name="Meyer R."/>
            <person name="Randall-Maher J."/>
            <person name="Tomlinson C."/>
            <person name="Dauphin-Kohlberg S."/>
            <person name="Kozlowicz-Reilly A."/>
            <person name="Shah N."/>
            <person name="Swearengen-Shahid S."/>
            <person name="Snider J."/>
            <person name="Strong J.T."/>
            <person name="Thompson J."/>
            <person name="Yoakum M."/>
            <person name="Leonard S."/>
            <person name="Pearman C."/>
            <person name="Trani L."/>
            <person name="Radionenko M."/>
            <person name="Waligorski J.E."/>
            <person name="Wang C."/>
            <person name="Rock S.M."/>
            <person name="Tin-Wollam A.-M."/>
            <person name="Maupin R."/>
            <person name="Latreille P."/>
            <person name="Wendl M.C."/>
            <person name="Yang S.-P."/>
            <person name="Pohl C."/>
            <person name="Wallis J.W."/>
            <person name="Spieth J."/>
            <person name="Bieri T.A."/>
            <person name="Berkowicz N."/>
            <person name="Nelson J.O."/>
            <person name="Osborne J."/>
            <person name="Ding L."/>
            <person name="Meyer R."/>
            <person name="Sabo A."/>
            <person name="Shotland Y."/>
            <person name="Sinha P."/>
            <person name="Wohldmann P.E."/>
            <person name="Cook L.L."/>
            <person name="Hickenbotham M.T."/>
            <person name="Eldred J."/>
            <person name="Williams D."/>
            <person name="Jones T.A."/>
            <person name="She X."/>
            <person name="Ciccarelli F.D."/>
            <person name="Izaurralde E."/>
            <person name="Taylor J."/>
            <person name="Schmutz J."/>
            <person name="Myers R.M."/>
            <person name="Cox D.R."/>
            <person name="Huang X."/>
            <person name="McPherson J.D."/>
            <person name="Mardis E.R."/>
            <person name="Clifton S.W."/>
            <person name="Warren W.C."/>
            <person name="Chinwalla A.T."/>
            <person name="Eddy S.R."/>
            <person name="Marra M.A."/>
            <person name="Ovcharenko I."/>
            <person name="Furey T.S."/>
            <person name="Miller W."/>
            <person name="Eichler E.E."/>
            <person name="Bork P."/>
            <person name="Suyama M."/>
            <person name="Torrents D."/>
            <person name="Waterston R.H."/>
            <person name="Wilson R.K."/>
        </authorList>
    </citation>
    <scope>NUCLEOTIDE SEQUENCE [LARGE SCALE GENOMIC DNA]</scope>
</reference>
<reference key="3">
    <citation type="journal article" date="1989" name="Nucleic Acids Res.">
        <title>The human HOX gene family.</title>
        <authorList>
            <person name="Acampora D."/>
            <person name="D'Esposito M."/>
            <person name="Faiella A."/>
            <person name="Pannese M."/>
            <person name="Migliaccio E."/>
            <person name="Morelli F."/>
            <person name="Stornaiuolo A."/>
            <person name="Nigro V."/>
            <person name="Simeone A."/>
            <person name="Boncinelli E."/>
        </authorList>
    </citation>
    <scope>NUCLEOTIDE SEQUENCE [GENOMIC DNA] OF 266-331</scope>
</reference>
<reference key="4">
    <citation type="journal article" date="2007" name="Am. J. Hum. Genet.">
        <title>Mutations in HOXD13 underlie syndactyly type V and a novel brachydactyly-syndactyly syndrome.</title>
        <authorList>
            <person name="Zhao X."/>
            <person name="Sun M."/>
            <person name="Zhao J."/>
            <person name="Leyva J.A."/>
            <person name="Zhu H."/>
            <person name="Yang W."/>
            <person name="Zeng X."/>
            <person name="Ao Y."/>
            <person name="Liu Q."/>
            <person name="Liu G."/>
            <person name="Lo W.H.Y."/>
            <person name="Jabs E.W."/>
            <person name="Amzel L.M."/>
            <person name="Shan X."/>
            <person name="Zhang X."/>
        </authorList>
    </citation>
    <scope>VARIANT ASP-245</scope>
</reference>
<name>HXD11_HUMAN</name>
<protein>
    <recommendedName>
        <fullName>Homeobox protein Hox-D11</fullName>
    </recommendedName>
    <alternativeName>
        <fullName>Homeobox protein Hox-4F</fullName>
    </alternativeName>
</protein>
<keyword id="KW-0217">Developmental protein</keyword>
<keyword id="KW-0238">DNA-binding</keyword>
<keyword id="KW-0371">Homeobox</keyword>
<keyword id="KW-0539">Nucleus</keyword>
<keyword id="KW-1267">Proteomics identification</keyword>
<keyword id="KW-1185">Reference proteome</keyword>
<keyword id="KW-0804">Transcription</keyword>
<keyword id="KW-0805">Transcription regulation</keyword>
<dbReference type="EMBL" id="AF154915">
    <property type="protein sequence ID" value="AAF79045.1"/>
    <property type="molecule type" value="Genomic_DNA"/>
</dbReference>
<dbReference type="EMBL" id="AC009336">
    <property type="status" value="NOT_ANNOTATED_CDS"/>
    <property type="molecule type" value="Genomic_DNA"/>
</dbReference>
<dbReference type="CCDS" id="CCDS2265.1"/>
<dbReference type="PIR" id="S14938">
    <property type="entry name" value="S14938"/>
</dbReference>
<dbReference type="RefSeq" id="NP_067015.2">
    <property type="nucleotide sequence ID" value="NM_021192.2"/>
</dbReference>
<dbReference type="SMR" id="P31277"/>
<dbReference type="BioGRID" id="109477">
    <property type="interactions" value="21"/>
</dbReference>
<dbReference type="FunCoup" id="P31277">
    <property type="interactions" value="787"/>
</dbReference>
<dbReference type="IntAct" id="P31277">
    <property type="interactions" value="6"/>
</dbReference>
<dbReference type="STRING" id="9606.ENSP00000249504"/>
<dbReference type="GlyGen" id="P31277">
    <property type="glycosylation" value="1 site, 1 O-linked glycan (1 site)"/>
</dbReference>
<dbReference type="iPTMnet" id="P31277"/>
<dbReference type="PhosphoSitePlus" id="P31277"/>
<dbReference type="BioMuta" id="HOXD11"/>
<dbReference type="DMDM" id="223590220"/>
<dbReference type="jPOST" id="P31277"/>
<dbReference type="MassIVE" id="P31277"/>
<dbReference type="PaxDb" id="9606-ENSP00000249504"/>
<dbReference type="PeptideAtlas" id="P31277"/>
<dbReference type="ProteomicsDB" id="54777"/>
<dbReference type="Pumba" id="P31277"/>
<dbReference type="Antibodypedia" id="33904">
    <property type="antibodies" value="306 antibodies from 29 providers"/>
</dbReference>
<dbReference type="DNASU" id="3237"/>
<dbReference type="Ensembl" id="ENST00000249504.7">
    <property type="protein sequence ID" value="ENSP00000249504.5"/>
    <property type="gene ID" value="ENSG00000128713.14"/>
</dbReference>
<dbReference type="GeneID" id="3237"/>
<dbReference type="KEGG" id="hsa:3237"/>
<dbReference type="MANE-Select" id="ENST00000249504.7">
    <property type="protein sequence ID" value="ENSP00000249504.5"/>
    <property type="RefSeq nucleotide sequence ID" value="NM_021192.3"/>
    <property type="RefSeq protein sequence ID" value="NP_067015.2"/>
</dbReference>
<dbReference type="UCSC" id="uc002uki.4">
    <property type="organism name" value="human"/>
</dbReference>
<dbReference type="AGR" id="HGNC:5134"/>
<dbReference type="CTD" id="3237"/>
<dbReference type="DisGeNET" id="3237"/>
<dbReference type="GeneCards" id="HOXD11"/>
<dbReference type="HGNC" id="HGNC:5134">
    <property type="gene designation" value="HOXD11"/>
</dbReference>
<dbReference type="HPA" id="ENSG00000128713">
    <property type="expression patterns" value="Tissue enhanced (endometrium, intestine, kidney, prostate, vagina)"/>
</dbReference>
<dbReference type="MIM" id="142986">
    <property type="type" value="gene"/>
</dbReference>
<dbReference type="neXtProt" id="NX_P31277"/>
<dbReference type="OpenTargets" id="ENSG00000128713"/>
<dbReference type="PharmGKB" id="PA29408"/>
<dbReference type="VEuPathDB" id="HostDB:ENSG00000128713"/>
<dbReference type="eggNOG" id="KOG0487">
    <property type="taxonomic scope" value="Eukaryota"/>
</dbReference>
<dbReference type="GeneTree" id="ENSGT00940000161308"/>
<dbReference type="HOGENOM" id="CLU_079662_0_0_1"/>
<dbReference type="InParanoid" id="P31277"/>
<dbReference type="OMA" id="CNFFTSV"/>
<dbReference type="OrthoDB" id="6159439at2759"/>
<dbReference type="PAN-GO" id="P31277">
    <property type="GO annotations" value="5 GO annotations based on evolutionary models"/>
</dbReference>
<dbReference type="PhylomeDB" id="P31277"/>
<dbReference type="TreeFam" id="TF350668"/>
<dbReference type="PathwayCommons" id="P31277"/>
<dbReference type="Reactome" id="R-HSA-9830674">
    <property type="pathway name" value="Formation of the ureteric bud"/>
</dbReference>
<dbReference type="SignaLink" id="P31277"/>
<dbReference type="SIGNOR" id="P31277"/>
<dbReference type="BioGRID-ORCS" id="3237">
    <property type="hits" value="30 hits in 1169 CRISPR screens"/>
</dbReference>
<dbReference type="ChiTaRS" id="HOXD11">
    <property type="organism name" value="human"/>
</dbReference>
<dbReference type="GeneWiki" id="HOXD11"/>
<dbReference type="GenomeRNAi" id="3237"/>
<dbReference type="Pharos" id="P31277">
    <property type="development level" value="Tbio"/>
</dbReference>
<dbReference type="PRO" id="PR:P31277"/>
<dbReference type="Proteomes" id="UP000005640">
    <property type="component" value="Chromosome 2"/>
</dbReference>
<dbReference type="RNAct" id="P31277">
    <property type="molecule type" value="protein"/>
</dbReference>
<dbReference type="Bgee" id="ENSG00000128713">
    <property type="expression patterns" value="Expressed in body of uterus and 53 other cell types or tissues"/>
</dbReference>
<dbReference type="GO" id="GO:0000785">
    <property type="term" value="C:chromatin"/>
    <property type="evidence" value="ECO:0000247"/>
    <property type="project" value="NTNU_SB"/>
</dbReference>
<dbReference type="GO" id="GO:0005654">
    <property type="term" value="C:nucleoplasm"/>
    <property type="evidence" value="ECO:0000314"/>
    <property type="project" value="HPA"/>
</dbReference>
<dbReference type="GO" id="GO:0005634">
    <property type="term" value="C:nucleus"/>
    <property type="evidence" value="ECO:0000318"/>
    <property type="project" value="GO_Central"/>
</dbReference>
<dbReference type="GO" id="GO:0000981">
    <property type="term" value="F:DNA-binding transcription factor activity, RNA polymerase II-specific"/>
    <property type="evidence" value="ECO:0000247"/>
    <property type="project" value="NTNU_SB"/>
</dbReference>
<dbReference type="GO" id="GO:0000978">
    <property type="term" value="F:RNA polymerase II cis-regulatory region sequence-specific DNA binding"/>
    <property type="evidence" value="ECO:0000318"/>
    <property type="project" value="GO_Central"/>
</dbReference>
<dbReference type="GO" id="GO:1990837">
    <property type="term" value="F:sequence-specific double-stranded DNA binding"/>
    <property type="evidence" value="ECO:0000314"/>
    <property type="project" value="ARUK-UCL"/>
</dbReference>
<dbReference type="GO" id="GO:0001658">
    <property type="term" value="P:branching involved in ureteric bud morphogenesis"/>
    <property type="evidence" value="ECO:0000250"/>
    <property type="project" value="UniProtKB"/>
</dbReference>
<dbReference type="GO" id="GO:0009953">
    <property type="term" value="P:dorsal/ventral pattern formation"/>
    <property type="evidence" value="ECO:0000250"/>
    <property type="project" value="UniProtKB"/>
</dbReference>
<dbReference type="GO" id="GO:0060272">
    <property type="term" value="P:embryonic skeletal joint morphogenesis"/>
    <property type="evidence" value="ECO:0000318"/>
    <property type="project" value="GO_Central"/>
</dbReference>
<dbReference type="GO" id="GO:0006357">
    <property type="term" value="P:regulation of transcription by RNA polymerase II"/>
    <property type="evidence" value="ECO:0000318"/>
    <property type="project" value="GO_Central"/>
</dbReference>
<dbReference type="CDD" id="cd00086">
    <property type="entry name" value="homeodomain"/>
    <property type="match status" value="1"/>
</dbReference>
<dbReference type="FunFam" id="1.10.10.60:FF:000166">
    <property type="entry name" value="homeobox protein Hox-C11"/>
    <property type="match status" value="1"/>
</dbReference>
<dbReference type="Gene3D" id="1.10.10.60">
    <property type="entry name" value="Homeodomain-like"/>
    <property type="match status" value="1"/>
</dbReference>
<dbReference type="InterPro" id="IPR021918">
    <property type="entry name" value="DUF3528"/>
</dbReference>
<dbReference type="InterPro" id="IPR001356">
    <property type="entry name" value="HD"/>
</dbReference>
<dbReference type="InterPro" id="IPR020479">
    <property type="entry name" value="HD_metazoa"/>
</dbReference>
<dbReference type="InterPro" id="IPR017970">
    <property type="entry name" value="Homeobox_CS"/>
</dbReference>
<dbReference type="InterPro" id="IPR009057">
    <property type="entry name" value="Homeodomain-like_sf"/>
</dbReference>
<dbReference type="PANTHER" id="PTHR46092">
    <property type="entry name" value="HOMEOBOX PROTEIN HOX-A11-RELATED"/>
    <property type="match status" value="1"/>
</dbReference>
<dbReference type="PANTHER" id="PTHR46092:SF2">
    <property type="entry name" value="HOMEOBOX PROTEIN HOX-D11"/>
    <property type="match status" value="1"/>
</dbReference>
<dbReference type="Pfam" id="PF12045">
    <property type="entry name" value="DUF3528"/>
    <property type="match status" value="2"/>
</dbReference>
<dbReference type="Pfam" id="PF00046">
    <property type="entry name" value="Homeodomain"/>
    <property type="match status" value="1"/>
</dbReference>
<dbReference type="PRINTS" id="PR00024">
    <property type="entry name" value="HOMEOBOX"/>
</dbReference>
<dbReference type="SMART" id="SM00389">
    <property type="entry name" value="HOX"/>
    <property type="match status" value="1"/>
</dbReference>
<dbReference type="SUPFAM" id="SSF46689">
    <property type="entry name" value="Homeodomain-like"/>
    <property type="match status" value="1"/>
</dbReference>
<dbReference type="PROSITE" id="PS00027">
    <property type="entry name" value="HOMEOBOX_1"/>
    <property type="match status" value="1"/>
</dbReference>
<dbReference type="PROSITE" id="PS50071">
    <property type="entry name" value="HOMEOBOX_2"/>
    <property type="match status" value="1"/>
</dbReference>
<evidence type="ECO:0000255" key="1">
    <source>
        <dbReference type="PROSITE-ProRule" id="PRU00108"/>
    </source>
</evidence>
<evidence type="ECO:0000256" key="2">
    <source>
        <dbReference type="SAM" id="MobiDB-lite"/>
    </source>
</evidence>
<evidence type="ECO:0000269" key="3">
    <source>
    </source>
</evidence>
<evidence type="ECO:0000305" key="4"/>
<accession>P31277</accession>
<accession>A6NIS4</accession>
<accession>Q9NS02</accession>
<sequence length="338" mass="35197">MNDFDECGQSAASMYLPGCAYYVAPSDFASKPSFLSQPSSCQMTFPYSSNLAPHVQPVREVAFRDYGLERAKWPYRGGGGGGSAGGGSSGGGPGGGGGGAGGYAPYYAAAAAAAAAAAAAEEAAMQRELLPPAGRRPDVLFKAPEPVCAAPGPPHGPAGAASNFYSAVGRNGILPQGFDQFYEAAPGPPFAGPQPPPPPAPPQPEGAADKGDPRTGAGGGGGSPCTKATPGSEPKGAAEGSGGDGEGPPGEAGAEKSSSAVAPQRSRKKRCPYTKYQIRELEREFFFNVYINKEKRLQLSRMLNLTDRQVKIWFQNRRMKEKKLNRDRLQYFTGNPLF</sequence>
<feature type="chain" id="PRO_0000200231" description="Homeobox protein Hox-D11">
    <location>
        <begin position="1"/>
        <end position="338"/>
    </location>
</feature>
<feature type="DNA-binding region" description="Homeobox" evidence="1">
    <location>
        <begin position="266"/>
        <end position="325"/>
    </location>
</feature>
<feature type="region of interest" description="Disordered" evidence="2">
    <location>
        <begin position="179"/>
        <end position="270"/>
    </location>
</feature>
<feature type="compositionally biased region" description="Pro residues" evidence="2">
    <location>
        <begin position="186"/>
        <end position="204"/>
    </location>
</feature>
<feature type="compositionally biased region" description="Gly residues" evidence="2">
    <location>
        <begin position="239"/>
        <end position="250"/>
    </location>
</feature>
<feature type="sequence variant" id="VAR_031647" description="In dbSNP:rs376305712." evidence="3">
    <original>G</original>
    <variation>D</variation>
    <location>
        <position position="245"/>
    </location>
</feature>
<feature type="sequence conflict" description="In Ref. 1; AAF79045." evidence="4" ref="1">
    <original>PPPPAPPQPE</original>
    <variation>RRHPRRHSPM</variation>
    <location>
        <begin position="196"/>
        <end position="205"/>
    </location>
</feature>
<gene>
    <name type="primary">HOXD11</name>
    <name type="synonym">HOX4F</name>
</gene>
<organism>
    <name type="scientific">Homo sapiens</name>
    <name type="common">Human</name>
    <dbReference type="NCBI Taxonomy" id="9606"/>
    <lineage>
        <taxon>Eukaryota</taxon>
        <taxon>Metazoa</taxon>
        <taxon>Chordata</taxon>
        <taxon>Craniata</taxon>
        <taxon>Vertebrata</taxon>
        <taxon>Euteleostomi</taxon>
        <taxon>Mammalia</taxon>
        <taxon>Eutheria</taxon>
        <taxon>Euarchontoglires</taxon>
        <taxon>Primates</taxon>
        <taxon>Haplorrhini</taxon>
        <taxon>Catarrhini</taxon>
        <taxon>Hominidae</taxon>
        <taxon>Homo</taxon>
    </lineage>
</organism>
<proteinExistence type="evidence at protein level"/>
<comment type="function">
    <text>Sequence-specific transcription factor which is part of a developmental regulatory system that provides cells with specific positional identities on the anterior-posterior axis.</text>
</comment>
<comment type="subcellular location">
    <subcellularLocation>
        <location>Nucleus</location>
    </subcellularLocation>
</comment>
<comment type="similarity">
    <text evidence="4">Belongs to the Abd-B homeobox family.</text>
</comment>